<feature type="chain" id="PRO_0000142701" description="Phosphoprotein">
    <location>
        <begin position="1"/>
        <end position="568"/>
    </location>
</feature>
<feature type="region of interest" description="Disordered" evidence="5">
    <location>
        <begin position="1"/>
        <end position="25"/>
    </location>
</feature>
<feature type="region of interest" description="N0 binding" evidence="1">
    <location>
        <begin position="33"/>
        <end position="41"/>
    </location>
</feature>
<feature type="region of interest" description="Disordered" evidence="5">
    <location>
        <begin position="55"/>
        <end position="322"/>
    </location>
</feature>
<feature type="region of interest" description="Multimerization" evidence="2">
    <location>
        <begin position="344"/>
        <end position="411"/>
    </location>
</feature>
<feature type="region of interest" description="L protein binding" evidence="1">
    <location>
        <begin position="412"/>
        <end position="445"/>
    </location>
</feature>
<feature type="region of interest" description="Disordered" evidence="5">
    <location>
        <begin position="434"/>
        <end position="455"/>
    </location>
</feature>
<feature type="region of interest" description="Interaction with the nucleocapsid (N-RNA)" evidence="1">
    <location>
        <begin position="479"/>
        <end position="568"/>
    </location>
</feature>
<feature type="region of interest" description="Disordered" evidence="5">
    <location>
        <begin position="494"/>
        <end position="513"/>
    </location>
</feature>
<feature type="coiled-coil region" evidence="4">
    <location>
        <begin position="387"/>
        <end position="416"/>
    </location>
</feature>
<feature type="compositionally biased region" description="Basic and acidic residues" evidence="5">
    <location>
        <begin position="7"/>
        <end position="24"/>
    </location>
</feature>
<feature type="compositionally biased region" description="Basic and acidic residues" evidence="5">
    <location>
        <begin position="56"/>
        <end position="105"/>
    </location>
</feature>
<feature type="compositionally biased region" description="Basic and acidic residues" evidence="5">
    <location>
        <begin position="132"/>
        <end position="144"/>
    </location>
</feature>
<feature type="compositionally biased region" description="Basic and acidic residues" evidence="5">
    <location>
        <begin position="151"/>
        <end position="167"/>
    </location>
</feature>
<feature type="compositionally biased region" description="Basic and acidic residues" evidence="5">
    <location>
        <begin position="175"/>
        <end position="190"/>
    </location>
</feature>
<feature type="compositionally biased region" description="Polar residues" evidence="5">
    <location>
        <begin position="191"/>
        <end position="216"/>
    </location>
</feature>
<feature type="compositionally biased region" description="Basic and acidic residues" evidence="5">
    <location>
        <begin position="239"/>
        <end position="265"/>
    </location>
</feature>
<feature type="compositionally biased region" description="Low complexity" evidence="5">
    <location>
        <begin position="294"/>
        <end position="304"/>
    </location>
</feature>
<feature type="compositionally biased region" description="Polar residues" evidence="5">
    <location>
        <begin position="441"/>
        <end position="450"/>
    </location>
</feature>
<proteinExistence type="inferred from homology"/>
<comment type="function">
    <text evidence="2 3">Essential cofactor of the RNA polymerase L that plays a central role in the transcription and replication by forming the polymerase complex with RNA polymerase L and recruiting L to the genomic N-RNA template for RNA synthesis. Also plays a central role in the encapsidation of nascent RNA chains by forming the encapsidation complex with the nucleocapsid protein N (N-P complex). Acts as a chaperone for newly synthesized free N protein, so-called N0, allowing encapsidation of nascent RNA chains during replication (By similarity). The nucleoprotein protein N prevents excessive phosphorylation of P, which leads to down-regulation of viral transcription/ replication. Participates, together with N, in the formation of viral factories (viroplasms), which are large inclusions in the host cytoplasm where replication takes place (By similarity). Recruits host PI4KB and remodel the host endoplasmic reticulum membrane to form viral replication factories (By similarity).</text>
</comment>
<comment type="subunit">
    <text evidence="1">Homotetramer. Interacts (via multimerization domain) with polymerase L; this interaction forms the polymerase complex. Interacts (via N-terminus) with N0; this interaction allows P to chaperon N0 before encapsidation and form the N-P complex. Interacts (via C-terminus) with N-RNA template; this interaction positions the polymerase on the template.</text>
</comment>
<comment type="domain">
    <text evidence="1 2">The N-terminus consists of a long intrinsically disordered tail (By similarity). The central part contains the coiled-coil multimerization domain (PMD). Forms a four-stranded coiled coil structure. The C-terminus constitutes the alpha-helical domain that binds to the nucleocapsid (N-RNA complex) (By similarity).</text>
</comment>
<comment type="similarity">
    <text evidence="6">Belongs to the respirovirus P protein family.</text>
</comment>
<gene>
    <name type="primary">P/C</name>
</gene>
<sequence length="568" mass="64644">MDQDAFFSERDPEAEGETPRKQESLSDVIGLLDVVLSYKPTEIGEDRSWLHSIIDNSKENKPSCKADDNNKDRAISTPTQDHRSSEESGISRRTGESKTETHARILDQQGIHRASRRGTSPNPLPENMGNERNTRIDEDSPNERRHQRSVPTDEDRKMAENSNKREEDQVEGFPEEVRRGTPLSDDREGRTNNNGRSMETSSTHSTRITDVITNPSPELEDAVLQRNKRRPTTIKRSQTRSERTQNSELHKSTSEDSSNLEDHNTKTSPKVLPSKNEESVATQKNNHNHRKTKYTTNNANNNTKSLPTPEHDTTANEEGTSNTSVDEMAKLLVSLGVIKSQHEFELSRSASHVFAKRMLKSANYKEMTFNLCGMLLSVEKSLENKVEENRTLLKQIQEEIDSSRDLHKRFSEYQKEQNSLMMANLSTLHIITDRGGKTGDPSDTTRSPSVFTKGKDNKVKKTRFDPSMEALGGQEFKPDLIREDELRDDIRNPVLEEHNNEPQASNASRLIPSTEKHTLHSLKLVIENSPLSRVEKKAYIKSLYKCRTNQEVKNVMELFEEDIDSLTN</sequence>
<organism>
    <name type="scientific">Human parainfluenza 1 virus (strain CI-5/73)</name>
    <name type="common">HPIV-1</name>
    <dbReference type="NCBI Taxonomy" id="31607"/>
    <lineage>
        <taxon>Viruses</taxon>
        <taxon>Riboviria</taxon>
        <taxon>Orthornavirae</taxon>
        <taxon>Negarnaviricota</taxon>
        <taxon>Haploviricotina</taxon>
        <taxon>Monjiviricetes</taxon>
        <taxon>Mononegavirales</taxon>
        <taxon>Paramyxoviridae</taxon>
        <taxon>Feraresvirinae</taxon>
        <taxon>Respirovirus</taxon>
        <taxon>Respirovirus laryngotracheitidis</taxon>
    </lineage>
</organism>
<keyword id="KW-0175">Coiled coil</keyword>
<keyword id="KW-0597">Phosphoprotein</keyword>
<keyword id="KW-0693">Viral RNA replication</keyword>
<name>PHOSP_PI1HD</name>
<protein>
    <recommendedName>
        <fullName>Phosphoprotein</fullName>
        <shortName>Protein P</shortName>
    </recommendedName>
</protein>
<dbReference type="EMBL" id="M74082">
    <property type="protein sequence ID" value="AAA46838.1"/>
    <property type="molecule type" value="Genomic_RNA"/>
</dbReference>
<dbReference type="SMR" id="P32531"/>
<dbReference type="GO" id="GO:0003723">
    <property type="term" value="F:RNA binding"/>
    <property type="evidence" value="ECO:0007669"/>
    <property type="project" value="InterPro"/>
</dbReference>
<dbReference type="GO" id="GO:0003968">
    <property type="term" value="F:RNA-directed RNA polymerase activity"/>
    <property type="evidence" value="ECO:0007669"/>
    <property type="project" value="InterPro"/>
</dbReference>
<dbReference type="GO" id="GO:0006351">
    <property type="term" value="P:DNA-templated transcription"/>
    <property type="evidence" value="ECO:0007669"/>
    <property type="project" value="InterPro"/>
</dbReference>
<dbReference type="GO" id="GO:0019079">
    <property type="term" value="P:viral genome replication"/>
    <property type="evidence" value="ECO:0007669"/>
    <property type="project" value="InterPro"/>
</dbReference>
<dbReference type="CDD" id="cd21031">
    <property type="entry name" value="MEV_P-protein-C_like"/>
    <property type="match status" value="1"/>
</dbReference>
<dbReference type="Gene3D" id="1.10.287.340">
    <property type="match status" value="1"/>
</dbReference>
<dbReference type="Gene3D" id="1.10.8.10">
    <property type="entry name" value="DNA helicase RuvA subunit, C-terminal domain"/>
    <property type="match status" value="1"/>
</dbReference>
<dbReference type="Gene3D" id="1.10.287.320">
    <property type="entry name" value="Viral phosphoprotein oligmorisation site domain"/>
    <property type="match status" value="1"/>
</dbReference>
<dbReference type="InterPro" id="IPR002693">
    <property type="entry name" value="Paramyxo_PProtein_C"/>
</dbReference>
<dbReference type="InterPro" id="IPR043097">
    <property type="entry name" value="PProtein_oligomer_dom1"/>
</dbReference>
<dbReference type="InterPro" id="IPR016075">
    <property type="entry name" value="RNA_pol_Pprot-P_XD_paramyxovir"/>
</dbReference>
<dbReference type="Pfam" id="PF01806">
    <property type="entry name" value="Paramyxo_P"/>
    <property type="match status" value="1"/>
</dbReference>
<dbReference type="SUPFAM" id="SSF58034">
    <property type="entry name" value="Multimerization domain of the phosphoprotein from sendai virus"/>
    <property type="match status" value="1"/>
</dbReference>
<dbReference type="SUPFAM" id="SSF101089">
    <property type="entry name" value="Phosphoprotein XD domain"/>
    <property type="match status" value="1"/>
</dbReference>
<reference key="1">
    <citation type="journal article" date="1992" name="Virology">
        <title>The P genes of human parainfluenza virus type 1 clinical isolates are polycistronic and microheterogeneous.</title>
        <authorList>
            <person name="Power U.F."/>
            <person name="Ryan K.W."/>
            <person name="Portner A."/>
        </authorList>
    </citation>
    <scope>NUCLEOTIDE SEQUENCE [GENOMIC RNA]</scope>
</reference>
<accession>P32531</accession>
<evidence type="ECO:0000250" key="1">
    <source>
        <dbReference type="UniProtKB" id="P04859"/>
    </source>
</evidence>
<evidence type="ECO:0000250" key="2">
    <source>
        <dbReference type="UniProtKB" id="P06162"/>
    </source>
</evidence>
<evidence type="ECO:0000250" key="3">
    <source>
        <dbReference type="UniProtKB" id="Q77M42"/>
    </source>
</evidence>
<evidence type="ECO:0000255" key="4"/>
<evidence type="ECO:0000256" key="5">
    <source>
        <dbReference type="SAM" id="MobiDB-lite"/>
    </source>
</evidence>
<evidence type="ECO:0000305" key="6"/>
<organismHost>
    <name type="scientific">Homo sapiens</name>
    <name type="common">Human</name>
    <dbReference type="NCBI Taxonomy" id="9606"/>
</organismHost>